<feature type="chain" id="PRO_1000045304" description="Probable transcriptional regulatory protein Dvul_0986">
    <location>
        <begin position="1"/>
        <end position="247"/>
    </location>
</feature>
<feature type="region of interest" description="Disordered" evidence="2">
    <location>
        <begin position="1"/>
        <end position="22"/>
    </location>
</feature>
<accession>A1VC41</accession>
<proteinExistence type="inferred from homology"/>
<evidence type="ECO:0000255" key="1">
    <source>
        <dbReference type="HAMAP-Rule" id="MF_00693"/>
    </source>
</evidence>
<evidence type="ECO:0000256" key="2">
    <source>
        <dbReference type="SAM" id="MobiDB-lite"/>
    </source>
</evidence>
<keyword id="KW-0963">Cytoplasm</keyword>
<keyword id="KW-0238">DNA-binding</keyword>
<keyword id="KW-0804">Transcription</keyword>
<keyword id="KW-0805">Transcription regulation</keyword>
<protein>
    <recommendedName>
        <fullName evidence="1">Probable transcriptional regulatory protein Dvul_0986</fullName>
    </recommendedName>
</protein>
<gene>
    <name type="ordered locus">Dvul_0986</name>
</gene>
<dbReference type="EMBL" id="CP000527">
    <property type="protein sequence ID" value="ABM28007.1"/>
    <property type="molecule type" value="Genomic_DNA"/>
</dbReference>
<dbReference type="RefSeq" id="WP_011791970.1">
    <property type="nucleotide sequence ID" value="NC_008751.1"/>
</dbReference>
<dbReference type="SMR" id="A1VC41"/>
<dbReference type="KEGG" id="dvl:Dvul_0986"/>
<dbReference type="HOGENOM" id="CLU_062974_2_2_7"/>
<dbReference type="Proteomes" id="UP000009173">
    <property type="component" value="Chromosome"/>
</dbReference>
<dbReference type="GO" id="GO:0005829">
    <property type="term" value="C:cytosol"/>
    <property type="evidence" value="ECO:0007669"/>
    <property type="project" value="TreeGrafter"/>
</dbReference>
<dbReference type="GO" id="GO:0003677">
    <property type="term" value="F:DNA binding"/>
    <property type="evidence" value="ECO:0007669"/>
    <property type="project" value="UniProtKB-UniRule"/>
</dbReference>
<dbReference type="GO" id="GO:0006355">
    <property type="term" value="P:regulation of DNA-templated transcription"/>
    <property type="evidence" value="ECO:0007669"/>
    <property type="project" value="UniProtKB-UniRule"/>
</dbReference>
<dbReference type="FunFam" id="1.10.10.200:FF:000002">
    <property type="entry name" value="Probable transcriptional regulatory protein CLM62_37755"/>
    <property type="match status" value="1"/>
</dbReference>
<dbReference type="FunFam" id="3.30.70.980:FF:000002">
    <property type="entry name" value="Probable transcriptional regulatory protein YebC"/>
    <property type="match status" value="1"/>
</dbReference>
<dbReference type="Gene3D" id="1.10.10.200">
    <property type="match status" value="1"/>
</dbReference>
<dbReference type="Gene3D" id="3.30.70.980">
    <property type="match status" value="2"/>
</dbReference>
<dbReference type="HAMAP" id="MF_00693">
    <property type="entry name" value="Transcrip_reg_TACO1"/>
    <property type="match status" value="1"/>
</dbReference>
<dbReference type="InterPro" id="IPR017856">
    <property type="entry name" value="Integrase-like_N"/>
</dbReference>
<dbReference type="InterPro" id="IPR048300">
    <property type="entry name" value="TACO1_YebC-like_2nd/3rd_dom"/>
</dbReference>
<dbReference type="InterPro" id="IPR049083">
    <property type="entry name" value="TACO1_YebC_N"/>
</dbReference>
<dbReference type="InterPro" id="IPR002876">
    <property type="entry name" value="Transcrip_reg_TACO1-like"/>
</dbReference>
<dbReference type="InterPro" id="IPR026564">
    <property type="entry name" value="Transcrip_reg_TACO1-like_dom3"/>
</dbReference>
<dbReference type="InterPro" id="IPR029072">
    <property type="entry name" value="YebC-like"/>
</dbReference>
<dbReference type="NCBIfam" id="NF001030">
    <property type="entry name" value="PRK00110.1"/>
    <property type="match status" value="1"/>
</dbReference>
<dbReference type="NCBIfam" id="NF009044">
    <property type="entry name" value="PRK12378.1"/>
    <property type="match status" value="1"/>
</dbReference>
<dbReference type="NCBIfam" id="TIGR01033">
    <property type="entry name" value="YebC/PmpR family DNA-binding transcriptional regulator"/>
    <property type="match status" value="1"/>
</dbReference>
<dbReference type="PANTHER" id="PTHR12532:SF6">
    <property type="entry name" value="TRANSCRIPTIONAL REGULATORY PROTEIN YEBC-RELATED"/>
    <property type="match status" value="1"/>
</dbReference>
<dbReference type="PANTHER" id="PTHR12532">
    <property type="entry name" value="TRANSLATIONAL ACTIVATOR OF CYTOCHROME C OXIDASE 1"/>
    <property type="match status" value="1"/>
</dbReference>
<dbReference type="Pfam" id="PF20772">
    <property type="entry name" value="TACO1_YebC_N"/>
    <property type="match status" value="1"/>
</dbReference>
<dbReference type="Pfam" id="PF01709">
    <property type="entry name" value="Transcrip_reg"/>
    <property type="match status" value="1"/>
</dbReference>
<dbReference type="SUPFAM" id="SSF75625">
    <property type="entry name" value="YebC-like"/>
    <property type="match status" value="1"/>
</dbReference>
<reference key="1">
    <citation type="journal article" date="2009" name="Environ. Microbiol.">
        <title>Contribution of mobile genetic elements to Desulfovibrio vulgaris genome plasticity.</title>
        <authorList>
            <person name="Walker C.B."/>
            <person name="Stolyar S."/>
            <person name="Chivian D."/>
            <person name="Pinel N."/>
            <person name="Gabster J.A."/>
            <person name="Dehal P.S."/>
            <person name="He Z."/>
            <person name="Yang Z.K."/>
            <person name="Yen H.C."/>
            <person name="Zhou J."/>
            <person name="Wall J.D."/>
            <person name="Hazen T.C."/>
            <person name="Arkin A.P."/>
            <person name="Stahl D.A."/>
        </authorList>
    </citation>
    <scope>NUCLEOTIDE SEQUENCE [LARGE SCALE GENOMIC DNA]</scope>
    <source>
        <strain>DP4</strain>
    </source>
</reference>
<sequence length="247" mass="26604">MAGHSKWANIQHRKGRQDAKRGKMFTKAAKEIIIAAKAGGDPVGNSRLRAAIAAAKAINLPKDKIENAIKKGTGELAGGDILEMAYEGYGPGGVALIVEVATDNKNRTVAEVRHILSKHGGSMGESGCVAWMFDRKGVITLEKDKYTEEQLMEVALEAGAEDVTDEGESWEVVTAAADFNAVREALEAAGVEMQSAEFTMVPQNEIEVDVETGRKLMRLVDALEDNDDVQNVHANFDLPDELLAELG</sequence>
<organism>
    <name type="scientific">Nitratidesulfovibrio vulgaris (strain DP4)</name>
    <name type="common">Desulfovibrio vulgaris</name>
    <dbReference type="NCBI Taxonomy" id="391774"/>
    <lineage>
        <taxon>Bacteria</taxon>
        <taxon>Pseudomonadati</taxon>
        <taxon>Thermodesulfobacteriota</taxon>
        <taxon>Desulfovibrionia</taxon>
        <taxon>Desulfovibrionales</taxon>
        <taxon>Desulfovibrionaceae</taxon>
        <taxon>Nitratidesulfovibrio</taxon>
    </lineage>
</organism>
<name>Y986_NITV4</name>
<comment type="subcellular location">
    <subcellularLocation>
        <location evidence="1">Cytoplasm</location>
    </subcellularLocation>
</comment>
<comment type="similarity">
    <text evidence="1">Belongs to the TACO1 family.</text>
</comment>